<dbReference type="EC" id="2.4.2.17" evidence="1"/>
<dbReference type="EMBL" id="CP000387">
    <property type="protein sequence ID" value="ABN44840.1"/>
    <property type="molecule type" value="Genomic_DNA"/>
</dbReference>
<dbReference type="RefSeq" id="WP_002909409.1">
    <property type="nucleotide sequence ID" value="NC_009009.1"/>
</dbReference>
<dbReference type="RefSeq" id="YP_001035390.1">
    <property type="nucleotide sequence ID" value="NC_009009.1"/>
</dbReference>
<dbReference type="SMR" id="A3CNT5"/>
<dbReference type="STRING" id="388919.SSA_1447"/>
<dbReference type="KEGG" id="ssa:SSA_1447"/>
<dbReference type="PATRIC" id="fig|388919.9.peg.1372"/>
<dbReference type="eggNOG" id="COG0040">
    <property type="taxonomic scope" value="Bacteria"/>
</dbReference>
<dbReference type="HOGENOM" id="CLU_038115_2_0_9"/>
<dbReference type="OrthoDB" id="9801867at2"/>
<dbReference type="UniPathway" id="UPA00031">
    <property type="reaction ID" value="UER00006"/>
</dbReference>
<dbReference type="Proteomes" id="UP000002148">
    <property type="component" value="Chromosome"/>
</dbReference>
<dbReference type="GO" id="GO:0005737">
    <property type="term" value="C:cytoplasm"/>
    <property type="evidence" value="ECO:0007669"/>
    <property type="project" value="UniProtKB-SubCell"/>
</dbReference>
<dbReference type="GO" id="GO:0005524">
    <property type="term" value="F:ATP binding"/>
    <property type="evidence" value="ECO:0007669"/>
    <property type="project" value="UniProtKB-KW"/>
</dbReference>
<dbReference type="GO" id="GO:0003879">
    <property type="term" value="F:ATP phosphoribosyltransferase activity"/>
    <property type="evidence" value="ECO:0007669"/>
    <property type="project" value="UniProtKB-UniRule"/>
</dbReference>
<dbReference type="GO" id="GO:0000105">
    <property type="term" value="P:L-histidine biosynthetic process"/>
    <property type="evidence" value="ECO:0007669"/>
    <property type="project" value="UniProtKB-UniRule"/>
</dbReference>
<dbReference type="CDD" id="cd13595">
    <property type="entry name" value="PBP2_HisGs"/>
    <property type="match status" value="1"/>
</dbReference>
<dbReference type="FunFam" id="3.40.190.10:FF:000008">
    <property type="entry name" value="ATP phosphoribosyltransferase"/>
    <property type="match status" value="1"/>
</dbReference>
<dbReference type="FunFam" id="3.40.190.10:FF:000011">
    <property type="entry name" value="ATP phosphoribosyltransferase"/>
    <property type="match status" value="1"/>
</dbReference>
<dbReference type="Gene3D" id="3.40.190.10">
    <property type="entry name" value="Periplasmic binding protein-like II"/>
    <property type="match status" value="2"/>
</dbReference>
<dbReference type="HAMAP" id="MF_01018">
    <property type="entry name" value="HisG_Short"/>
    <property type="match status" value="1"/>
</dbReference>
<dbReference type="InterPro" id="IPR013820">
    <property type="entry name" value="ATP_PRibTrfase_cat"/>
</dbReference>
<dbReference type="InterPro" id="IPR018198">
    <property type="entry name" value="ATP_PRibTrfase_CS"/>
</dbReference>
<dbReference type="InterPro" id="IPR001348">
    <property type="entry name" value="ATP_PRibTrfase_HisG"/>
</dbReference>
<dbReference type="InterPro" id="IPR024893">
    <property type="entry name" value="ATP_PRibTrfase_HisG_short"/>
</dbReference>
<dbReference type="NCBIfam" id="TIGR00070">
    <property type="entry name" value="hisG"/>
    <property type="match status" value="1"/>
</dbReference>
<dbReference type="PANTHER" id="PTHR21403:SF8">
    <property type="entry name" value="ATP PHOSPHORIBOSYLTRANSFERASE"/>
    <property type="match status" value="1"/>
</dbReference>
<dbReference type="PANTHER" id="PTHR21403">
    <property type="entry name" value="ATP PHOSPHORIBOSYLTRANSFERASE ATP-PRTASE"/>
    <property type="match status" value="1"/>
</dbReference>
<dbReference type="Pfam" id="PF01634">
    <property type="entry name" value="HisG"/>
    <property type="match status" value="1"/>
</dbReference>
<dbReference type="SUPFAM" id="SSF53850">
    <property type="entry name" value="Periplasmic binding protein-like II"/>
    <property type="match status" value="1"/>
</dbReference>
<dbReference type="PROSITE" id="PS01316">
    <property type="entry name" value="ATP_P_PHORIBOSYLTR"/>
    <property type="match status" value="1"/>
</dbReference>
<gene>
    <name evidence="1" type="primary">hisG</name>
    <name type="ordered locus">SSA_1447</name>
</gene>
<proteinExistence type="inferred from homology"/>
<sequence>MSQITIALTKGRIEKDTVKLLTQAGFDMSFMADKGRSLIFESPDSRFRFLLVKGPDVTTYVRHGVADLGIVGKDILFEHPTGYLELLDLNFGLCKFSLASVPSYDPHDHKRKRIATKYPTVATDYFNQKGEDVEIISIQGSVEISPVLGLADAIVDIVETGHTLSANGLLVFEDICRVSARLIANQASLKNNPDIMPFVAKIESLVGRREVAFK</sequence>
<comment type="function">
    <text evidence="1">Catalyzes the condensation of ATP and 5-phosphoribose 1-diphosphate to form N'-(5'-phosphoribosyl)-ATP (PR-ATP). Has a crucial role in the pathway because the rate of histidine biosynthesis seems to be controlled primarily by regulation of HisG enzymatic activity.</text>
</comment>
<comment type="catalytic activity">
    <reaction evidence="1">
        <text>1-(5-phospho-beta-D-ribosyl)-ATP + diphosphate = 5-phospho-alpha-D-ribose 1-diphosphate + ATP</text>
        <dbReference type="Rhea" id="RHEA:18473"/>
        <dbReference type="ChEBI" id="CHEBI:30616"/>
        <dbReference type="ChEBI" id="CHEBI:33019"/>
        <dbReference type="ChEBI" id="CHEBI:58017"/>
        <dbReference type="ChEBI" id="CHEBI:73183"/>
        <dbReference type="EC" id="2.4.2.17"/>
    </reaction>
</comment>
<comment type="pathway">
    <text evidence="1">Amino-acid biosynthesis; L-histidine biosynthesis; L-histidine from 5-phospho-alpha-D-ribose 1-diphosphate: step 1/9.</text>
</comment>
<comment type="subunit">
    <text evidence="1">Heteromultimer composed of HisG and HisZ subunits.</text>
</comment>
<comment type="subcellular location">
    <subcellularLocation>
        <location evidence="1">Cytoplasm</location>
    </subcellularLocation>
</comment>
<comment type="domain">
    <text>Lacks the C-terminal regulatory region which is replaced by HisZ.</text>
</comment>
<comment type="similarity">
    <text evidence="1">Belongs to the ATP phosphoribosyltransferase family. Short subfamily.</text>
</comment>
<evidence type="ECO:0000255" key="1">
    <source>
        <dbReference type="HAMAP-Rule" id="MF_01018"/>
    </source>
</evidence>
<organism>
    <name type="scientific">Streptococcus sanguinis (strain SK36)</name>
    <dbReference type="NCBI Taxonomy" id="388919"/>
    <lineage>
        <taxon>Bacteria</taxon>
        <taxon>Bacillati</taxon>
        <taxon>Bacillota</taxon>
        <taxon>Bacilli</taxon>
        <taxon>Lactobacillales</taxon>
        <taxon>Streptococcaceae</taxon>
        <taxon>Streptococcus</taxon>
    </lineage>
</organism>
<feature type="chain" id="PRO_0000319534" description="ATP phosphoribosyltransferase">
    <location>
        <begin position="1"/>
        <end position="214"/>
    </location>
</feature>
<keyword id="KW-0028">Amino-acid biosynthesis</keyword>
<keyword id="KW-0067">ATP-binding</keyword>
<keyword id="KW-0963">Cytoplasm</keyword>
<keyword id="KW-0328">Glycosyltransferase</keyword>
<keyword id="KW-0368">Histidine biosynthesis</keyword>
<keyword id="KW-0547">Nucleotide-binding</keyword>
<keyword id="KW-1185">Reference proteome</keyword>
<keyword id="KW-0808">Transferase</keyword>
<protein>
    <recommendedName>
        <fullName evidence="1">ATP phosphoribosyltransferase</fullName>
        <shortName evidence="1">ATP-PRT</shortName>
        <shortName evidence="1">ATP-PRTase</shortName>
        <ecNumber evidence="1">2.4.2.17</ecNumber>
    </recommendedName>
</protein>
<reference key="1">
    <citation type="journal article" date="2007" name="J. Bacteriol.">
        <title>Genome of the opportunistic pathogen Streptococcus sanguinis.</title>
        <authorList>
            <person name="Xu P."/>
            <person name="Alves J.M."/>
            <person name="Kitten T."/>
            <person name="Brown A."/>
            <person name="Chen Z."/>
            <person name="Ozaki L.S."/>
            <person name="Manque P."/>
            <person name="Ge X."/>
            <person name="Serrano M.G."/>
            <person name="Puiu D."/>
            <person name="Hendricks S."/>
            <person name="Wang Y."/>
            <person name="Chaplin M.D."/>
            <person name="Akan D."/>
            <person name="Paik S."/>
            <person name="Peterson D.L."/>
            <person name="Macrina F.L."/>
            <person name="Buck G.A."/>
        </authorList>
    </citation>
    <scope>NUCLEOTIDE SEQUENCE [LARGE SCALE GENOMIC DNA]</scope>
    <source>
        <strain>SK36</strain>
    </source>
</reference>
<accession>A3CNT5</accession>
<name>HIS1_STRSV</name>